<feature type="chain" id="PRO_1000142966" description="Large ribosomal subunit protein uL16">
    <location>
        <begin position="1"/>
        <end position="136"/>
    </location>
</feature>
<comment type="function">
    <text evidence="1">Binds 23S rRNA and is also seen to make contacts with the A and possibly P site tRNAs.</text>
</comment>
<comment type="subunit">
    <text evidence="1">Part of the 50S ribosomal subunit.</text>
</comment>
<comment type="similarity">
    <text evidence="1">Belongs to the universal ribosomal protein uL16 family.</text>
</comment>
<protein>
    <recommendedName>
        <fullName evidence="1">Large ribosomal subunit protein uL16</fullName>
    </recommendedName>
    <alternativeName>
        <fullName evidence="2">50S ribosomal protein L16</fullName>
    </alternativeName>
</protein>
<proteinExistence type="inferred from homology"/>
<name>RL16_ECO8A</name>
<evidence type="ECO:0000255" key="1">
    <source>
        <dbReference type="HAMAP-Rule" id="MF_01342"/>
    </source>
</evidence>
<evidence type="ECO:0000305" key="2"/>
<keyword id="KW-0687">Ribonucleoprotein</keyword>
<keyword id="KW-0689">Ribosomal protein</keyword>
<keyword id="KW-0694">RNA-binding</keyword>
<keyword id="KW-0699">rRNA-binding</keyword>
<keyword id="KW-0820">tRNA-binding</keyword>
<organism>
    <name type="scientific">Escherichia coli O8 (strain IAI1)</name>
    <dbReference type="NCBI Taxonomy" id="585034"/>
    <lineage>
        <taxon>Bacteria</taxon>
        <taxon>Pseudomonadati</taxon>
        <taxon>Pseudomonadota</taxon>
        <taxon>Gammaproteobacteria</taxon>
        <taxon>Enterobacterales</taxon>
        <taxon>Enterobacteriaceae</taxon>
        <taxon>Escherichia</taxon>
    </lineage>
</organism>
<accession>B7M1M7</accession>
<reference key="1">
    <citation type="journal article" date="2009" name="PLoS Genet.">
        <title>Organised genome dynamics in the Escherichia coli species results in highly diverse adaptive paths.</title>
        <authorList>
            <person name="Touchon M."/>
            <person name="Hoede C."/>
            <person name="Tenaillon O."/>
            <person name="Barbe V."/>
            <person name="Baeriswyl S."/>
            <person name="Bidet P."/>
            <person name="Bingen E."/>
            <person name="Bonacorsi S."/>
            <person name="Bouchier C."/>
            <person name="Bouvet O."/>
            <person name="Calteau A."/>
            <person name="Chiapello H."/>
            <person name="Clermont O."/>
            <person name="Cruveiller S."/>
            <person name="Danchin A."/>
            <person name="Diard M."/>
            <person name="Dossat C."/>
            <person name="Karoui M.E."/>
            <person name="Frapy E."/>
            <person name="Garry L."/>
            <person name="Ghigo J.M."/>
            <person name="Gilles A.M."/>
            <person name="Johnson J."/>
            <person name="Le Bouguenec C."/>
            <person name="Lescat M."/>
            <person name="Mangenot S."/>
            <person name="Martinez-Jehanne V."/>
            <person name="Matic I."/>
            <person name="Nassif X."/>
            <person name="Oztas S."/>
            <person name="Petit M.A."/>
            <person name="Pichon C."/>
            <person name="Rouy Z."/>
            <person name="Ruf C.S."/>
            <person name="Schneider D."/>
            <person name="Tourret J."/>
            <person name="Vacherie B."/>
            <person name="Vallenet D."/>
            <person name="Medigue C."/>
            <person name="Rocha E.P.C."/>
            <person name="Denamur E."/>
        </authorList>
    </citation>
    <scope>NUCLEOTIDE SEQUENCE [LARGE SCALE GENOMIC DNA]</scope>
    <source>
        <strain>IAI1</strain>
    </source>
</reference>
<sequence length="136" mass="15281">MLQPKRTKFRKMHKGRNRGLAQGTDVSFGSFGLKAVGRGRLTARQIEAARRAMTRAVKRQGKIWIRVFPDKPITEKPLAVRMGKGKGNVEYWVALIQPGKVLYEMDGVPEELAREAFKLAAAKLPIKTTFVTKTVM</sequence>
<dbReference type="EMBL" id="CU928160">
    <property type="protein sequence ID" value="CAR00264.1"/>
    <property type="molecule type" value="Genomic_DNA"/>
</dbReference>
<dbReference type="RefSeq" id="WP_000941212.1">
    <property type="nucleotide sequence ID" value="NC_011741.1"/>
</dbReference>
<dbReference type="SMR" id="B7M1M7"/>
<dbReference type="GeneID" id="93778674"/>
<dbReference type="KEGG" id="ecr:ECIAI1_3462"/>
<dbReference type="HOGENOM" id="CLU_078858_2_1_6"/>
<dbReference type="GO" id="GO:0022625">
    <property type="term" value="C:cytosolic large ribosomal subunit"/>
    <property type="evidence" value="ECO:0007669"/>
    <property type="project" value="TreeGrafter"/>
</dbReference>
<dbReference type="GO" id="GO:0019843">
    <property type="term" value="F:rRNA binding"/>
    <property type="evidence" value="ECO:0007669"/>
    <property type="project" value="UniProtKB-UniRule"/>
</dbReference>
<dbReference type="GO" id="GO:0003735">
    <property type="term" value="F:structural constituent of ribosome"/>
    <property type="evidence" value="ECO:0007669"/>
    <property type="project" value="InterPro"/>
</dbReference>
<dbReference type="GO" id="GO:0000049">
    <property type="term" value="F:tRNA binding"/>
    <property type="evidence" value="ECO:0007669"/>
    <property type="project" value="UniProtKB-KW"/>
</dbReference>
<dbReference type="GO" id="GO:0006412">
    <property type="term" value="P:translation"/>
    <property type="evidence" value="ECO:0007669"/>
    <property type="project" value="UniProtKB-UniRule"/>
</dbReference>
<dbReference type="CDD" id="cd01433">
    <property type="entry name" value="Ribosomal_L16_L10e"/>
    <property type="match status" value="1"/>
</dbReference>
<dbReference type="FunFam" id="3.90.1170.10:FF:000001">
    <property type="entry name" value="50S ribosomal protein L16"/>
    <property type="match status" value="1"/>
</dbReference>
<dbReference type="Gene3D" id="3.90.1170.10">
    <property type="entry name" value="Ribosomal protein L10e/L16"/>
    <property type="match status" value="1"/>
</dbReference>
<dbReference type="HAMAP" id="MF_01342">
    <property type="entry name" value="Ribosomal_uL16"/>
    <property type="match status" value="1"/>
</dbReference>
<dbReference type="InterPro" id="IPR047873">
    <property type="entry name" value="Ribosomal_uL16"/>
</dbReference>
<dbReference type="InterPro" id="IPR000114">
    <property type="entry name" value="Ribosomal_uL16_bact-type"/>
</dbReference>
<dbReference type="InterPro" id="IPR020798">
    <property type="entry name" value="Ribosomal_uL16_CS"/>
</dbReference>
<dbReference type="InterPro" id="IPR016180">
    <property type="entry name" value="Ribosomal_uL16_dom"/>
</dbReference>
<dbReference type="InterPro" id="IPR036920">
    <property type="entry name" value="Ribosomal_uL16_sf"/>
</dbReference>
<dbReference type="NCBIfam" id="TIGR01164">
    <property type="entry name" value="rplP_bact"/>
    <property type="match status" value="1"/>
</dbReference>
<dbReference type="PANTHER" id="PTHR12220">
    <property type="entry name" value="50S/60S RIBOSOMAL PROTEIN L16"/>
    <property type="match status" value="1"/>
</dbReference>
<dbReference type="PANTHER" id="PTHR12220:SF13">
    <property type="entry name" value="LARGE RIBOSOMAL SUBUNIT PROTEIN UL16M"/>
    <property type="match status" value="1"/>
</dbReference>
<dbReference type="Pfam" id="PF00252">
    <property type="entry name" value="Ribosomal_L16"/>
    <property type="match status" value="1"/>
</dbReference>
<dbReference type="PRINTS" id="PR00060">
    <property type="entry name" value="RIBOSOMALL16"/>
</dbReference>
<dbReference type="SUPFAM" id="SSF54686">
    <property type="entry name" value="Ribosomal protein L16p/L10e"/>
    <property type="match status" value="1"/>
</dbReference>
<dbReference type="PROSITE" id="PS00586">
    <property type="entry name" value="RIBOSOMAL_L16_1"/>
    <property type="match status" value="1"/>
</dbReference>
<dbReference type="PROSITE" id="PS00701">
    <property type="entry name" value="RIBOSOMAL_L16_2"/>
    <property type="match status" value="1"/>
</dbReference>
<gene>
    <name evidence="1" type="primary">rplP</name>
    <name type="ordered locus">ECIAI1_3462</name>
</gene>